<accession>Q8FM80</accession>
<keyword id="KW-0143">Chaperone</keyword>
<keyword id="KW-0963">Cytoplasm</keyword>
<keyword id="KW-0235">DNA replication</keyword>
<keyword id="KW-0479">Metal-binding</keyword>
<keyword id="KW-1185">Reference proteome</keyword>
<keyword id="KW-0677">Repeat</keyword>
<keyword id="KW-0346">Stress response</keyword>
<keyword id="KW-0862">Zinc</keyword>
<keyword id="KW-0863">Zinc-finger</keyword>
<comment type="function">
    <text evidence="1">Participates actively in the response to hyperosmotic and heat shock by preventing the aggregation of stress-denatured proteins and by disaggregating proteins, also in an autonomous, DnaK-independent fashion. Unfolded proteins bind initially to DnaJ; upon interaction with the DnaJ-bound protein, DnaK hydrolyzes its bound ATP, resulting in the formation of a stable complex. GrpE releases ADP from DnaK; ATP binding to DnaK triggers the release of the substrate protein, thus completing the reaction cycle. Several rounds of ATP-dependent interactions between DnaJ, DnaK and GrpE are required for fully efficient folding. Also involved, together with DnaK and GrpE, in the DNA replication of plasmids through activation of initiation proteins.</text>
</comment>
<comment type="cofactor">
    <cofactor evidence="1">
        <name>Zn(2+)</name>
        <dbReference type="ChEBI" id="CHEBI:29105"/>
    </cofactor>
    <text evidence="1">Binds 2 Zn(2+) ions per monomer.</text>
</comment>
<comment type="subunit">
    <text evidence="1">Homodimer.</text>
</comment>
<comment type="subcellular location">
    <subcellularLocation>
        <location evidence="1">Cytoplasm</location>
    </subcellularLocation>
</comment>
<comment type="domain">
    <text evidence="1">The J domain is necessary and sufficient to stimulate DnaK ATPase activity. Zinc center 1 plays an important role in the autonomous, DnaK-independent chaperone activity of DnaJ. Zinc center 2 is essential for interaction with DnaK and for DnaJ activity.</text>
</comment>
<comment type="similarity">
    <text evidence="1">Belongs to the DnaJ family.</text>
</comment>
<protein>
    <recommendedName>
        <fullName evidence="1">Chaperone protein DnaJ 2</fullName>
    </recommendedName>
</protein>
<sequence>MNNAEWANKDYYADLGVSKNASAEDIKKAYRKLARENHPDKNPGDKVAEDRFKKAAEAYDVVGDETKRREYDDLKKLLASGGIRGGFGSGGADFPGGFRSTQGFDASDLFGGAGPGGGFSADGGLGDIFGGIFNRGSSPRQSARPTRGADVETDITLEFREAAKGTTIPVELTGEAPCNTCHGSGSASGQPSKCGQCNGSGFTSENKGAFGFSAPCTNCGGTGEVITDPCVDCRGRGTVRRTRSITVRIPAGVEDGQKVRLAGQGEAGPNGKPAGDLFVRVHVKEDPVFEREGNNIHVTVPVSFSELALGGAISVPTLDKPVKLKLAPGTPDGRTLRVRGRGVETRTAKGDLMVTVQVTVPPTLSDEAAEALRTYAEAEKKSGFDPRANWAGNNR</sequence>
<organism>
    <name type="scientific">Corynebacterium efficiens (strain DSM 44549 / YS-314 / AJ 12310 / JCM 11189 / NBRC 100395)</name>
    <dbReference type="NCBI Taxonomy" id="196164"/>
    <lineage>
        <taxon>Bacteria</taxon>
        <taxon>Bacillati</taxon>
        <taxon>Actinomycetota</taxon>
        <taxon>Actinomycetes</taxon>
        <taxon>Mycobacteriales</taxon>
        <taxon>Corynebacteriaceae</taxon>
        <taxon>Corynebacterium</taxon>
    </lineage>
</organism>
<reference key="1">
    <citation type="journal article" date="2003" name="Genome Res.">
        <title>Comparative complete genome sequence analysis of the amino acid replacements responsible for the thermostability of Corynebacterium efficiens.</title>
        <authorList>
            <person name="Nishio Y."/>
            <person name="Nakamura Y."/>
            <person name="Kawarabayasi Y."/>
            <person name="Usuda Y."/>
            <person name="Kimura E."/>
            <person name="Sugimoto S."/>
            <person name="Matsui K."/>
            <person name="Yamagishi A."/>
            <person name="Kikuchi H."/>
            <person name="Ikeo K."/>
            <person name="Gojobori T."/>
        </authorList>
    </citation>
    <scope>NUCLEOTIDE SEQUENCE [LARGE SCALE GENOMIC DNA]</scope>
    <source>
        <strain>DSM 44549 / YS-314 / AJ 12310 / JCM 11189 / NBRC 100395</strain>
    </source>
</reference>
<gene>
    <name evidence="1" type="primary">dnaJ2</name>
    <name type="ordered locus">CE2627</name>
</gene>
<proteinExistence type="inferred from homology"/>
<evidence type="ECO:0000255" key="1">
    <source>
        <dbReference type="HAMAP-Rule" id="MF_01152"/>
    </source>
</evidence>
<name>DNAJ2_COREF</name>
<dbReference type="EMBL" id="BA000035">
    <property type="protein sequence ID" value="BAC19437.1"/>
    <property type="molecule type" value="Genomic_DNA"/>
</dbReference>
<dbReference type="RefSeq" id="WP_006769009.1">
    <property type="nucleotide sequence ID" value="NC_004369.1"/>
</dbReference>
<dbReference type="SMR" id="Q8FM80"/>
<dbReference type="STRING" id="196164.gene:10743074"/>
<dbReference type="KEGG" id="cef:CE2627"/>
<dbReference type="eggNOG" id="COG0484">
    <property type="taxonomic scope" value="Bacteria"/>
</dbReference>
<dbReference type="HOGENOM" id="CLU_017633_0_7_11"/>
<dbReference type="OrthoDB" id="9779889at2"/>
<dbReference type="Proteomes" id="UP000001409">
    <property type="component" value="Chromosome"/>
</dbReference>
<dbReference type="GO" id="GO:0005737">
    <property type="term" value="C:cytoplasm"/>
    <property type="evidence" value="ECO:0007669"/>
    <property type="project" value="UniProtKB-SubCell"/>
</dbReference>
<dbReference type="GO" id="GO:0005524">
    <property type="term" value="F:ATP binding"/>
    <property type="evidence" value="ECO:0007669"/>
    <property type="project" value="InterPro"/>
</dbReference>
<dbReference type="GO" id="GO:0031072">
    <property type="term" value="F:heat shock protein binding"/>
    <property type="evidence" value="ECO:0007669"/>
    <property type="project" value="InterPro"/>
</dbReference>
<dbReference type="GO" id="GO:0051082">
    <property type="term" value="F:unfolded protein binding"/>
    <property type="evidence" value="ECO:0007669"/>
    <property type="project" value="UniProtKB-UniRule"/>
</dbReference>
<dbReference type="GO" id="GO:0008270">
    <property type="term" value="F:zinc ion binding"/>
    <property type="evidence" value="ECO:0007669"/>
    <property type="project" value="UniProtKB-UniRule"/>
</dbReference>
<dbReference type="GO" id="GO:0051085">
    <property type="term" value="P:chaperone cofactor-dependent protein refolding"/>
    <property type="evidence" value="ECO:0007669"/>
    <property type="project" value="TreeGrafter"/>
</dbReference>
<dbReference type="GO" id="GO:0006260">
    <property type="term" value="P:DNA replication"/>
    <property type="evidence" value="ECO:0007669"/>
    <property type="project" value="UniProtKB-KW"/>
</dbReference>
<dbReference type="GO" id="GO:0042026">
    <property type="term" value="P:protein refolding"/>
    <property type="evidence" value="ECO:0007669"/>
    <property type="project" value="TreeGrafter"/>
</dbReference>
<dbReference type="GO" id="GO:0009408">
    <property type="term" value="P:response to heat"/>
    <property type="evidence" value="ECO:0007669"/>
    <property type="project" value="InterPro"/>
</dbReference>
<dbReference type="CDD" id="cd06257">
    <property type="entry name" value="DnaJ"/>
    <property type="match status" value="1"/>
</dbReference>
<dbReference type="CDD" id="cd10747">
    <property type="entry name" value="DnaJ_C"/>
    <property type="match status" value="1"/>
</dbReference>
<dbReference type="FunFam" id="2.60.260.20:FF:000005">
    <property type="entry name" value="Chaperone protein dnaJ 1, mitochondrial"/>
    <property type="match status" value="1"/>
</dbReference>
<dbReference type="FunFam" id="2.10.230.10:FF:000002">
    <property type="entry name" value="Molecular chaperone DnaJ"/>
    <property type="match status" value="1"/>
</dbReference>
<dbReference type="Gene3D" id="1.10.287.110">
    <property type="entry name" value="DnaJ domain"/>
    <property type="match status" value="1"/>
</dbReference>
<dbReference type="Gene3D" id="2.10.230.10">
    <property type="entry name" value="Heat shock protein DnaJ, cysteine-rich domain"/>
    <property type="match status" value="1"/>
</dbReference>
<dbReference type="Gene3D" id="2.60.260.20">
    <property type="entry name" value="Urease metallochaperone UreE, N-terminal domain"/>
    <property type="match status" value="2"/>
</dbReference>
<dbReference type="HAMAP" id="MF_01152">
    <property type="entry name" value="DnaJ"/>
    <property type="match status" value="1"/>
</dbReference>
<dbReference type="InterPro" id="IPR012724">
    <property type="entry name" value="DnaJ"/>
</dbReference>
<dbReference type="InterPro" id="IPR002939">
    <property type="entry name" value="DnaJ_C"/>
</dbReference>
<dbReference type="InterPro" id="IPR001623">
    <property type="entry name" value="DnaJ_domain"/>
</dbReference>
<dbReference type="InterPro" id="IPR008971">
    <property type="entry name" value="HSP40/DnaJ_pept-bd"/>
</dbReference>
<dbReference type="InterPro" id="IPR001305">
    <property type="entry name" value="HSP_DnaJ_Cys-rich_dom"/>
</dbReference>
<dbReference type="InterPro" id="IPR036410">
    <property type="entry name" value="HSP_DnaJ_Cys-rich_dom_sf"/>
</dbReference>
<dbReference type="InterPro" id="IPR036869">
    <property type="entry name" value="J_dom_sf"/>
</dbReference>
<dbReference type="NCBIfam" id="TIGR02349">
    <property type="entry name" value="DnaJ_bact"/>
    <property type="match status" value="1"/>
</dbReference>
<dbReference type="NCBIfam" id="NF008035">
    <property type="entry name" value="PRK10767.1"/>
    <property type="match status" value="1"/>
</dbReference>
<dbReference type="NCBIfam" id="NF010872">
    <property type="entry name" value="PRK14279.1"/>
    <property type="match status" value="1"/>
</dbReference>
<dbReference type="PANTHER" id="PTHR43096:SF54">
    <property type="entry name" value="CHAPERONE PROTEIN DNAJ 1"/>
    <property type="match status" value="1"/>
</dbReference>
<dbReference type="PANTHER" id="PTHR43096">
    <property type="entry name" value="DNAJ HOMOLOG 1, MITOCHONDRIAL-RELATED"/>
    <property type="match status" value="1"/>
</dbReference>
<dbReference type="Pfam" id="PF00226">
    <property type="entry name" value="DnaJ"/>
    <property type="match status" value="1"/>
</dbReference>
<dbReference type="Pfam" id="PF01556">
    <property type="entry name" value="DnaJ_C"/>
    <property type="match status" value="1"/>
</dbReference>
<dbReference type="Pfam" id="PF00684">
    <property type="entry name" value="DnaJ_CXXCXGXG"/>
    <property type="match status" value="1"/>
</dbReference>
<dbReference type="PRINTS" id="PR00625">
    <property type="entry name" value="JDOMAIN"/>
</dbReference>
<dbReference type="SMART" id="SM00271">
    <property type="entry name" value="DnaJ"/>
    <property type="match status" value="1"/>
</dbReference>
<dbReference type="SUPFAM" id="SSF46565">
    <property type="entry name" value="Chaperone J-domain"/>
    <property type="match status" value="1"/>
</dbReference>
<dbReference type="SUPFAM" id="SSF57938">
    <property type="entry name" value="DnaJ/Hsp40 cysteine-rich domain"/>
    <property type="match status" value="1"/>
</dbReference>
<dbReference type="SUPFAM" id="SSF49493">
    <property type="entry name" value="HSP40/DnaJ peptide-binding domain"/>
    <property type="match status" value="2"/>
</dbReference>
<dbReference type="PROSITE" id="PS50076">
    <property type="entry name" value="DNAJ_2"/>
    <property type="match status" value="1"/>
</dbReference>
<dbReference type="PROSITE" id="PS51188">
    <property type="entry name" value="ZF_CR"/>
    <property type="match status" value="1"/>
</dbReference>
<feature type="chain" id="PRO_0000070769" description="Chaperone protein DnaJ 2">
    <location>
        <begin position="1"/>
        <end position="395"/>
    </location>
</feature>
<feature type="domain" description="J" evidence="1">
    <location>
        <begin position="10"/>
        <end position="75"/>
    </location>
</feature>
<feature type="repeat" description="CXXCXGXG motif">
    <location>
        <begin position="178"/>
        <end position="185"/>
    </location>
</feature>
<feature type="repeat" description="CXXCXGXG motif">
    <location>
        <begin position="194"/>
        <end position="201"/>
    </location>
</feature>
<feature type="repeat" description="CXXCXGXG motif">
    <location>
        <begin position="216"/>
        <end position="223"/>
    </location>
</feature>
<feature type="repeat" description="CXXCXGXG motif">
    <location>
        <begin position="230"/>
        <end position="237"/>
    </location>
</feature>
<feature type="zinc finger region" description="CR-type" evidence="1">
    <location>
        <begin position="165"/>
        <end position="242"/>
    </location>
</feature>
<feature type="binding site" evidence="1">
    <location>
        <position position="178"/>
    </location>
    <ligand>
        <name>Zn(2+)</name>
        <dbReference type="ChEBI" id="CHEBI:29105"/>
        <label>1</label>
    </ligand>
</feature>
<feature type="binding site" evidence="1">
    <location>
        <position position="181"/>
    </location>
    <ligand>
        <name>Zn(2+)</name>
        <dbReference type="ChEBI" id="CHEBI:29105"/>
        <label>1</label>
    </ligand>
</feature>
<feature type="binding site" evidence="1">
    <location>
        <position position="194"/>
    </location>
    <ligand>
        <name>Zn(2+)</name>
        <dbReference type="ChEBI" id="CHEBI:29105"/>
        <label>2</label>
    </ligand>
</feature>
<feature type="binding site" evidence="1">
    <location>
        <position position="197"/>
    </location>
    <ligand>
        <name>Zn(2+)</name>
        <dbReference type="ChEBI" id="CHEBI:29105"/>
        <label>2</label>
    </ligand>
</feature>
<feature type="binding site" evidence="1">
    <location>
        <position position="216"/>
    </location>
    <ligand>
        <name>Zn(2+)</name>
        <dbReference type="ChEBI" id="CHEBI:29105"/>
        <label>2</label>
    </ligand>
</feature>
<feature type="binding site" evidence="1">
    <location>
        <position position="219"/>
    </location>
    <ligand>
        <name>Zn(2+)</name>
        <dbReference type="ChEBI" id="CHEBI:29105"/>
        <label>2</label>
    </ligand>
</feature>
<feature type="binding site" evidence="1">
    <location>
        <position position="230"/>
    </location>
    <ligand>
        <name>Zn(2+)</name>
        <dbReference type="ChEBI" id="CHEBI:29105"/>
        <label>1</label>
    </ligand>
</feature>
<feature type="binding site" evidence="1">
    <location>
        <position position="233"/>
    </location>
    <ligand>
        <name>Zn(2+)</name>
        <dbReference type="ChEBI" id="CHEBI:29105"/>
        <label>1</label>
    </ligand>
</feature>